<accession>A5GQ73</accession>
<dbReference type="EC" id="4.1.99.17" evidence="1"/>
<dbReference type="EMBL" id="CT978603">
    <property type="protein sequence ID" value="CAK27032.1"/>
    <property type="molecule type" value="Genomic_DNA"/>
</dbReference>
<dbReference type="SMR" id="A5GQ73"/>
<dbReference type="STRING" id="316278.SynRCC307_0129"/>
<dbReference type="KEGG" id="syr:SynRCC307_0129"/>
<dbReference type="eggNOG" id="COG0422">
    <property type="taxonomic scope" value="Bacteria"/>
</dbReference>
<dbReference type="HOGENOM" id="CLU_013181_2_1_3"/>
<dbReference type="OrthoDB" id="9805897at2"/>
<dbReference type="UniPathway" id="UPA00060"/>
<dbReference type="Proteomes" id="UP000001115">
    <property type="component" value="Chromosome"/>
</dbReference>
<dbReference type="GO" id="GO:0005829">
    <property type="term" value="C:cytosol"/>
    <property type="evidence" value="ECO:0007669"/>
    <property type="project" value="TreeGrafter"/>
</dbReference>
<dbReference type="GO" id="GO:0051539">
    <property type="term" value="F:4 iron, 4 sulfur cluster binding"/>
    <property type="evidence" value="ECO:0007669"/>
    <property type="project" value="UniProtKB-KW"/>
</dbReference>
<dbReference type="GO" id="GO:0016830">
    <property type="term" value="F:carbon-carbon lyase activity"/>
    <property type="evidence" value="ECO:0007669"/>
    <property type="project" value="InterPro"/>
</dbReference>
<dbReference type="GO" id="GO:0008270">
    <property type="term" value="F:zinc ion binding"/>
    <property type="evidence" value="ECO:0007669"/>
    <property type="project" value="UniProtKB-UniRule"/>
</dbReference>
<dbReference type="GO" id="GO:0009228">
    <property type="term" value="P:thiamine biosynthetic process"/>
    <property type="evidence" value="ECO:0007669"/>
    <property type="project" value="UniProtKB-KW"/>
</dbReference>
<dbReference type="GO" id="GO:0009229">
    <property type="term" value="P:thiamine diphosphate biosynthetic process"/>
    <property type="evidence" value="ECO:0007669"/>
    <property type="project" value="UniProtKB-UniRule"/>
</dbReference>
<dbReference type="FunFam" id="3.20.20.540:FF:000001">
    <property type="entry name" value="Phosphomethylpyrimidine synthase"/>
    <property type="match status" value="1"/>
</dbReference>
<dbReference type="Gene3D" id="6.10.250.620">
    <property type="match status" value="1"/>
</dbReference>
<dbReference type="Gene3D" id="3.20.20.540">
    <property type="entry name" value="Radical SAM ThiC family, central domain"/>
    <property type="match status" value="1"/>
</dbReference>
<dbReference type="HAMAP" id="MF_00089">
    <property type="entry name" value="ThiC"/>
    <property type="match status" value="1"/>
</dbReference>
<dbReference type="InterPro" id="IPR037509">
    <property type="entry name" value="ThiC"/>
</dbReference>
<dbReference type="InterPro" id="IPR038521">
    <property type="entry name" value="ThiC/Bza_core_dom"/>
</dbReference>
<dbReference type="InterPro" id="IPR002817">
    <property type="entry name" value="ThiC/BzaA/B"/>
</dbReference>
<dbReference type="NCBIfam" id="NF006763">
    <property type="entry name" value="PRK09284.1"/>
    <property type="match status" value="1"/>
</dbReference>
<dbReference type="NCBIfam" id="NF009895">
    <property type="entry name" value="PRK13352.1"/>
    <property type="match status" value="1"/>
</dbReference>
<dbReference type="NCBIfam" id="TIGR00190">
    <property type="entry name" value="thiC"/>
    <property type="match status" value="1"/>
</dbReference>
<dbReference type="PANTHER" id="PTHR30557:SF1">
    <property type="entry name" value="PHOSPHOMETHYLPYRIMIDINE SYNTHASE, CHLOROPLASTIC"/>
    <property type="match status" value="1"/>
</dbReference>
<dbReference type="PANTHER" id="PTHR30557">
    <property type="entry name" value="THIAMINE BIOSYNTHESIS PROTEIN THIC"/>
    <property type="match status" value="1"/>
</dbReference>
<dbReference type="Pfam" id="PF01964">
    <property type="entry name" value="ThiC_Rad_SAM"/>
    <property type="match status" value="1"/>
</dbReference>
<dbReference type="SFLD" id="SFLDF00407">
    <property type="entry name" value="phosphomethylpyrimidine_syntha"/>
    <property type="match status" value="1"/>
</dbReference>
<dbReference type="SFLD" id="SFLDG01114">
    <property type="entry name" value="phosphomethylpyrimidine_syntha"/>
    <property type="match status" value="1"/>
</dbReference>
<dbReference type="SFLD" id="SFLDS00113">
    <property type="entry name" value="Radical_SAM_Phosphomethylpyrim"/>
    <property type="match status" value="1"/>
</dbReference>
<organism>
    <name type="scientific">Synechococcus sp. (strain RCC307)</name>
    <dbReference type="NCBI Taxonomy" id="316278"/>
    <lineage>
        <taxon>Bacteria</taxon>
        <taxon>Bacillati</taxon>
        <taxon>Cyanobacteriota</taxon>
        <taxon>Cyanophyceae</taxon>
        <taxon>Synechococcales</taxon>
        <taxon>Synechococcaceae</taxon>
        <taxon>Synechococcus</taxon>
    </lineage>
</organism>
<keyword id="KW-0004">4Fe-4S</keyword>
<keyword id="KW-0408">Iron</keyword>
<keyword id="KW-0411">Iron-sulfur</keyword>
<keyword id="KW-0456">Lyase</keyword>
<keyword id="KW-0479">Metal-binding</keyword>
<keyword id="KW-1185">Reference proteome</keyword>
<keyword id="KW-0949">S-adenosyl-L-methionine</keyword>
<keyword id="KW-0784">Thiamine biosynthesis</keyword>
<keyword id="KW-0862">Zinc</keyword>
<evidence type="ECO:0000255" key="1">
    <source>
        <dbReference type="HAMAP-Rule" id="MF_00089"/>
    </source>
</evidence>
<gene>
    <name evidence="1" type="primary">thiC</name>
    <name type="ordered locus">SynRCC307_0129</name>
</gene>
<protein>
    <recommendedName>
        <fullName evidence="1">Phosphomethylpyrimidine synthase</fullName>
        <ecNumber evidence="1">4.1.99.17</ecNumber>
    </recommendedName>
    <alternativeName>
        <fullName evidence="1">Hydroxymethylpyrimidine phosphate synthase</fullName>
        <shortName evidence="1">HMP-P synthase</shortName>
        <shortName evidence="1">HMP-phosphate synthase</shortName>
        <shortName evidence="1">HMPP synthase</shortName>
    </alternativeName>
    <alternativeName>
        <fullName evidence="1">Thiamine biosynthesis protein ThiC</fullName>
    </alternativeName>
</protein>
<feature type="chain" id="PRO_1000004809" description="Phosphomethylpyrimidine synthase">
    <location>
        <begin position="1"/>
        <end position="466"/>
    </location>
</feature>
<feature type="binding site" evidence="1">
    <location>
        <position position="80"/>
    </location>
    <ligand>
        <name>substrate</name>
    </ligand>
</feature>
<feature type="binding site" evidence="1">
    <location>
        <position position="109"/>
    </location>
    <ligand>
        <name>substrate</name>
    </ligand>
</feature>
<feature type="binding site" evidence="1">
    <location>
        <position position="139"/>
    </location>
    <ligand>
        <name>substrate</name>
    </ligand>
</feature>
<feature type="binding site" evidence="1">
    <location>
        <position position="175"/>
    </location>
    <ligand>
        <name>substrate</name>
    </ligand>
</feature>
<feature type="binding site" evidence="1">
    <location>
        <begin position="195"/>
        <end position="197"/>
    </location>
    <ligand>
        <name>substrate</name>
    </ligand>
</feature>
<feature type="binding site" evidence="1">
    <location>
        <begin position="236"/>
        <end position="239"/>
    </location>
    <ligand>
        <name>substrate</name>
    </ligand>
</feature>
<feature type="binding site" evidence="1">
    <location>
        <position position="275"/>
    </location>
    <ligand>
        <name>substrate</name>
    </ligand>
</feature>
<feature type="binding site" evidence="1">
    <location>
        <position position="279"/>
    </location>
    <ligand>
        <name>Zn(2+)</name>
        <dbReference type="ChEBI" id="CHEBI:29105"/>
    </ligand>
</feature>
<feature type="binding site" evidence="1">
    <location>
        <position position="302"/>
    </location>
    <ligand>
        <name>substrate</name>
    </ligand>
</feature>
<feature type="binding site" evidence="1">
    <location>
        <position position="343"/>
    </location>
    <ligand>
        <name>Zn(2+)</name>
        <dbReference type="ChEBI" id="CHEBI:29105"/>
    </ligand>
</feature>
<feature type="binding site" evidence="1">
    <location>
        <position position="423"/>
    </location>
    <ligand>
        <name>[4Fe-4S] cluster</name>
        <dbReference type="ChEBI" id="CHEBI:49883"/>
        <note>4Fe-4S-S-AdoMet</note>
    </ligand>
</feature>
<feature type="binding site" evidence="1">
    <location>
        <position position="426"/>
    </location>
    <ligand>
        <name>[4Fe-4S] cluster</name>
        <dbReference type="ChEBI" id="CHEBI:49883"/>
        <note>4Fe-4S-S-AdoMet</note>
    </ligand>
</feature>
<feature type="binding site" evidence="1">
    <location>
        <position position="431"/>
    </location>
    <ligand>
        <name>[4Fe-4S] cluster</name>
        <dbReference type="ChEBI" id="CHEBI:49883"/>
        <note>4Fe-4S-S-AdoMet</note>
    </ligand>
</feature>
<proteinExistence type="inferred from homology"/>
<sequence length="466" mass="51652">MRSAWIEKRRGSANVSQLHYARQGVVTEEMAYVAKRENLPESLVMEEVARGRMIIPANINHANLEPMAIGIASKCKVNANIGASPNASDASEEVKKLELAVKYGADTVMDLSTGGVNLDEVRTAIINASPVPIGTVPVYQALESVHGSIERLSEDDFLHIIEKHCQQGVDYQTIHAGLLIEHLPKVKGRLTGIVSRGGGILAQWMLYHHKQNPLYTRFEDICEIFKRYDCTFSLGDSLRPGCQHDASDDAQLAELKTLGELTRRAWKHDVQVMVEGPGHVPMDQIEFNVKKQMEECSEAPFYVLGPLVTDIAPGYDHITSAIGAAMAGWHGTAMLCYVTPKEHLGLPNADDVREGLIAYKIAAHAADIARHRPGARDRDDELSRARYAFDWNKQFELSLDPERAKEYHDETLPADIYKQAEFCSMCGPKHCPMQTKITDKDLESLEEVLKAKGGAELSTAKLDRAD</sequence>
<reference key="1">
    <citation type="submission" date="2006-05" db="EMBL/GenBank/DDBJ databases">
        <authorList>
            <consortium name="Genoscope"/>
        </authorList>
    </citation>
    <scope>NUCLEOTIDE SEQUENCE [LARGE SCALE GENOMIC DNA]</scope>
    <source>
        <strain>RCC307</strain>
    </source>
</reference>
<comment type="function">
    <text evidence="1">Catalyzes the synthesis of the hydroxymethylpyrimidine phosphate (HMP-P) moiety of thiamine from aminoimidazole ribotide (AIR) in a radical S-adenosyl-L-methionine (SAM)-dependent reaction.</text>
</comment>
<comment type="catalytic activity">
    <reaction evidence="1">
        <text>5-amino-1-(5-phospho-beta-D-ribosyl)imidazole + S-adenosyl-L-methionine = 4-amino-2-methyl-5-(phosphooxymethyl)pyrimidine + CO + 5'-deoxyadenosine + formate + L-methionine + 3 H(+)</text>
        <dbReference type="Rhea" id="RHEA:24840"/>
        <dbReference type="ChEBI" id="CHEBI:15378"/>
        <dbReference type="ChEBI" id="CHEBI:15740"/>
        <dbReference type="ChEBI" id="CHEBI:17245"/>
        <dbReference type="ChEBI" id="CHEBI:17319"/>
        <dbReference type="ChEBI" id="CHEBI:57844"/>
        <dbReference type="ChEBI" id="CHEBI:58354"/>
        <dbReference type="ChEBI" id="CHEBI:59789"/>
        <dbReference type="ChEBI" id="CHEBI:137981"/>
        <dbReference type="EC" id="4.1.99.17"/>
    </reaction>
</comment>
<comment type="cofactor">
    <cofactor evidence="1">
        <name>[4Fe-4S] cluster</name>
        <dbReference type="ChEBI" id="CHEBI:49883"/>
    </cofactor>
    <text evidence="1">Binds 1 [4Fe-4S] cluster per subunit. The cluster is coordinated with 3 cysteines and an exchangeable S-adenosyl-L-methionine.</text>
</comment>
<comment type="pathway">
    <text evidence="1">Cofactor biosynthesis; thiamine diphosphate biosynthesis.</text>
</comment>
<comment type="similarity">
    <text evidence="1">Belongs to the ThiC family.</text>
</comment>
<name>THIC_SYNR3</name>